<proteinExistence type="inferred from homology"/>
<comment type="function">
    <text evidence="1">ATP-dependent specificity component of the Clp protease. It directs the protease to specific substrates. Can perform chaperone functions in the absence of ClpP.</text>
</comment>
<comment type="subunit">
    <text evidence="1">Component of the ClpX-ClpP complex. Forms a hexameric ring that, in the presence of ATP, binds to fourteen ClpP subunits assembled into a disk-like structure with a central cavity, resembling the structure of eukaryotic proteasomes.</text>
</comment>
<comment type="similarity">
    <text evidence="1">Belongs to the ClpX chaperone family.</text>
</comment>
<keyword id="KW-0067">ATP-binding</keyword>
<keyword id="KW-0143">Chaperone</keyword>
<keyword id="KW-0479">Metal-binding</keyword>
<keyword id="KW-0547">Nucleotide-binding</keyword>
<keyword id="KW-1185">Reference proteome</keyword>
<keyword id="KW-0862">Zinc</keyword>
<sequence>MGEDKGNGDGGKLLYCSFCGKSQHEVRKLIAGPSVYVCDECVELCNDIIREEIKEISPKQDQDKLPTPHELRAHLDDYVIGQDKAKKVLAVAVYNHYKRLRNASPKDGVELGKSNILLIGPTGSGKTLLAETLARVLDVPFTMADATTLTEAGYVGEDVENIIQKLLQKCDYDVEKAQRGIVYIDEIDKISRKSDNPSITRDVSGEGVQQALLKLIEGTIAAVPPQGGRKHPQQEFLQVDTSKILFVCGGAFAGLEKVIEQRAHVGTGIGFGAQVKGEADKKTISDTLLEVEPEDLVKFGLIPEFIGRLPVLATLSELDDEALIQILSEPKNAITKQFAALFEMENVELEFRDDALKAIALKAQTRKTGARGLRSIVEGILLDIMYDLPSTDDVAKVVIDESVVKGESSPILIYANNEAQTATAE</sequence>
<gene>
    <name evidence="1" type="primary">clpX</name>
    <name type="ordered locus">Spea_2680</name>
</gene>
<name>CLPX_SHEPA</name>
<organism>
    <name type="scientific">Shewanella pealeana (strain ATCC 700345 / ANG-SQ1)</name>
    <dbReference type="NCBI Taxonomy" id="398579"/>
    <lineage>
        <taxon>Bacteria</taxon>
        <taxon>Pseudomonadati</taxon>
        <taxon>Pseudomonadota</taxon>
        <taxon>Gammaproteobacteria</taxon>
        <taxon>Alteromonadales</taxon>
        <taxon>Shewanellaceae</taxon>
        <taxon>Shewanella</taxon>
    </lineage>
</organism>
<protein>
    <recommendedName>
        <fullName evidence="1">ATP-dependent Clp protease ATP-binding subunit ClpX</fullName>
    </recommendedName>
</protein>
<feature type="chain" id="PRO_1000077177" description="ATP-dependent Clp protease ATP-binding subunit ClpX">
    <location>
        <begin position="1"/>
        <end position="425"/>
    </location>
</feature>
<feature type="domain" description="ClpX-type ZB" evidence="2">
    <location>
        <begin position="4"/>
        <end position="57"/>
    </location>
</feature>
<feature type="binding site" evidence="2">
    <location>
        <position position="16"/>
    </location>
    <ligand>
        <name>Zn(2+)</name>
        <dbReference type="ChEBI" id="CHEBI:29105"/>
    </ligand>
</feature>
<feature type="binding site" evidence="2">
    <location>
        <position position="19"/>
    </location>
    <ligand>
        <name>Zn(2+)</name>
        <dbReference type="ChEBI" id="CHEBI:29105"/>
    </ligand>
</feature>
<feature type="binding site" evidence="2">
    <location>
        <position position="38"/>
    </location>
    <ligand>
        <name>Zn(2+)</name>
        <dbReference type="ChEBI" id="CHEBI:29105"/>
    </ligand>
</feature>
<feature type="binding site" evidence="2">
    <location>
        <position position="41"/>
    </location>
    <ligand>
        <name>Zn(2+)</name>
        <dbReference type="ChEBI" id="CHEBI:29105"/>
    </ligand>
</feature>
<feature type="binding site" evidence="1">
    <location>
        <begin position="121"/>
        <end position="128"/>
    </location>
    <ligand>
        <name>ATP</name>
        <dbReference type="ChEBI" id="CHEBI:30616"/>
    </ligand>
</feature>
<dbReference type="EMBL" id="CP000851">
    <property type="protein sequence ID" value="ABV88000.1"/>
    <property type="molecule type" value="Genomic_DNA"/>
</dbReference>
<dbReference type="RefSeq" id="WP_012155906.1">
    <property type="nucleotide sequence ID" value="NC_009901.1"/>
</dbReference>
<dbReference type="SMR" id="A8H613"/>
<dbReference type="STRING" id="398579.Spea_2680"/>
<dbReference type="KEGG" id="spl:Spea_2680"/>
<dbReference type="eggNOG" id="COG1219">
    <property type="taxonomic scope" value="Bacteria"/>
</dbReference>
<dbReference type="HOGENOM" id="CLU_014218_8_2_6"/>
<dbReference type="OrthoDB" id="9804062at2"/>
<dbReference type="Proteomes" id="UP000002608">
    <property type="component" value="Chromosome"/>
</dbReference>
<dbReference type="GO" id="GO:0009376">
    <property type="term" value="C:HslUV protease complex"/>
    <property type="evidence" value="ECO:0007669"/>
    <property type="project" value="TreeGrafter"/>
</dbReference>
<dbReference type="GO" id="GO:0005524">
    <property type="term" value="F:ATP binding"/>
    <property type="evidence" value="ECO:0007669"/>
    <property type="project" value="UniProtKB-UniRule"/>
</dbReference>
<dbReference type="GO" id="GO:0016887">
    <property type="term" value="F:ATP hydrolysis activity"/>
    <property type="evidence" value="ECO:0007669"/>
    <property type="project" value="InterPro"/>
</dbReference>
<dbReference type="GO" id="GO:0140662">
    <property type="term" value="F:ATP-dependent protein folding chaperone"/>
    <property type="evidence" value="ECO:0007669"/>
    <property type="project" value="InterPro"/>
</dbReference>
<dbReference type="GO" id="GO:0046983">
    <property type="term" value="F:protein dimerization activity"/>
    <property type="evidence" value="ECO:0007669"/>
    <property type="project" value="InterPro"/>
</dbReference>
<dbReference type="GO" id="GO:0051082">
    <property type="term" value="F:unfolded protein binding"/>
    <property type="evidence" value="ECO:0007669"/>
    <property type="project" value="UniProtKB-UniRule"/>
</dbReference>
<dbReference type="GO" id="GO:0008270">
    <property type="term" value="F:zinc ion binding"/>
    <property type="evidence" value="ECO:0007669"/>
    <property type="project" value="InterPro"/>
</dbReference>
<dbReference type="GO" id="GO:0051301">
    <property type="term" value="P:cell division"/>
    <property type="evidence" value="ECO:0007669"/>
    <property type="project" value="TreeGrafter"/>
</dbReference>
<dbReference type="GO" id="GO:0051603">
    <property type="term" value="P:proteolysis involved in protein catabolic process"/>
    <property type="evidence" value="ECO:0007669"/>
    <property type="project" value="TreeGrafter"/>
</dbReference>
<dbReference type="CDD" id="cd19497">
    <property type="entry name" value="RecA-like_ClpX"/>
    <property type="match status" value="1"/>
</dbReference>
<dbReference type="FunFam" id="1.10.8.60:FF:000002">
    <property type="entry name" value="ATP-dependent Clp protease ATP-binding subunit ClpX"/>
    <property type="match status" value="1"/>
</dbReference>
<dbReference type="FunFam" id="3.40.50.300:FF:000005">
    <property type="entry name" value="ATP-dependent Clp protease ATP-binding subunit ClpX"/>
    <property type="match status" value="1"/>
</dbReference>
<dbReference type="Gene3D" id="1.10.8.60">
    <property type="match status" value="1"/>
</dbReference>
<dbReference type="Gene3D" id="6.20.220.10">
    <property type="entry name" value="ClpX chaperone, C4-type zinc finger domain"/>
    <property type="match status" value="1"/>
</dbReference>
<dbReference type="Gene3D" id="3.40.50.300">
    <property type="entry name" value="P-loop containing nucleotide triphosphate hydrolases"/>
    <property type="match status" value="1"/>
</dbReference>
<dbReference type="HAMAP" id="MF_00175">
    <property type="entry name" value="ClpX"/>
    <property type="match status" value="1"/>
</dbReference>
<dbReference type="InterPro" id="IPR003593">
    <property type="entry name" value="AAA+_ATPase"/>
</dbReference>
<dbReference type="InterPro" id="IPR050052">
    <property type="entry name" value="ATP-dep_Clp_protease_ClpX"/>
</dbReference>
<dbReference type="InterPro" id="IPR003959">
    <property type="entry name" value="ATPase_AAA_core"/>
</dbReference>
<dbReference type="InterPro" id="IPR019489">
    <property type="entry name" value="Clp_ATPase_C"/>
</dbReference>
<dbReference type="InterPro" id="IPR004487">
    <property type="entry name" value="Clp_protease_ATP-bd_su_ClpX"/>
</dbReference>
<dbReference type="InterPro" id="IPR046425">
    <property type="entry name" value="ClpX_bact"/>
</dbReference>
<dbReference type="InterPro" id="IPR027417">
    <property type="entry name" value="P-loop_NTPase"/>
</dbReference>
<dbReference type="InterPro" id="IPR010603">
    <property type="entry name" value="Znf_CppX_C4"/>
</dbReference>
<dbReference type="InterPro" id="IPR038366">
    <property type="entry name" value="Znf_CppX_C4_sf"/>
</dbReference>
<dbReference type="NCBIfam" id="TIGR00382">
    <property type="entry name" value="clpX"/>
    <property type="match status" value="1"/>
</dbReference>
<dbReference type="NCBIfam" id="NF003745">
    <property type="entry name" value="PRK05342.1"/>
    <property type="match status" value="1"/>
</dbReference>
<dbReference type="PANTHER" id="PTHR48102:SF7">
    <property type="entry name" value="ATP-DEPENDENT CLP PROTEASE ATP-BINDING SUBUNIT CLPX-LIKE, MITOCHONDRIAL"/>
    <property type="match status" value="1"/>
</dbReference>
<dbReference type="PANTHER" id="PTHR48102">
    <property type="entry name" value="ATP-DEPENDENT CLP PROTEASE ATP-BINDING SUBUNIT CLPX-LIKE, MITOCHONDRIAL-RELATED"/>
    <property type="match status" value="1"/>
</dbReference>
<dbReference type="Pfam" id="PF07724">
    <property type="entry name" value="AAA_2"/>
    <property type="match status" value="1"/>
</dbReference>
<dbReference type="Pfam" id="PF10431">
    <property type="entry name" value="ClpB_D2-small"/>
    <property type="match status" value="1"/>
</dbReference>
<dbReference type="Pfam" id="PF06689">
    <property type="entry name" value="zf-C4_ClpX"/>
    <property type="match status" value="1"/>
</dbReference>
<dbReference type="SMART" id="SM00382">
    <property type="entry name" value="AAA"/>
    <property type="match status" value="1"/>
</dbReference>
<dbReference type="SMART" id="SM01086">
    <property type="entry name" value="ClpB_D2-small"/>
    <property type="match status" value="1"/>
</dbReference>
<dbReference type="SMART" id="SM00994">
    <property type="entry name" value="zf-C4_ClpX"/>
    <property type="match status" value="1"/>
</dbReference>
<dbReference type="SUPFAM" id="SSF57716">
    <property type="entry name" value="Glucocorticoid receptor-like (DNA-binding domain)"/>
    <property type="match status" value="1"/>
</dbReference>
<dbReference type="SUPFAM" id="SSF52540">
    <property type="entry name" value="P-loop containing nucleoside triphosphate hydrolases"/>
    <property type="match status" value="1"/>
</dbReference>
<dbReference type="PROSITE" id="PS51902">
    <property type="entry name" value="CLPX_ZB"/>
    <property type="match status" value="1"/>
</dbReference>
<evidence type="ECO:0000255" key="1">
    <source>
        <dbReference type="HAMAP-Rule" id="MF_00175"/>
    </source>
</evidence>
<evidence type="ECO:0000255" key="2">
    <source>
        <dbReference type="PROSITE-ProRule" id="PRU01250"/>
    </source>
</evidence>
<reference key="1">
    <citation type="submission" date="2007-10" db="EMBL/GenBank/DDBJ databases">
        <title>Complete sequence of Shewanella pealeana ATCC 700345.</title>
        <authorList>
            <consortium name="US DOE Joint Genome Institute"/>
            <person name="Copeland A."/>
            <person name="Lucas S."/>
            <person name="Lapidus A."/>
            <person name="Barry K."/>
            <person name="Glavina del Rio T."/>
            <person name="Dalin E."/>
            <person name="Tice H."/>
            <person name="Pitluck S."/>
            <person name="Chertkov O."/>
            <person name="Brettin T."/>
            <person name="Bruce D."/>
            <person name="Detter J.C."/>
            <person name="Han C."/>
            <person name="Schmutz J."/>
            <person name="Larimer F."/>
            <person name="Land M."/>
            <person name="Hauser L."/>
            <person name="Kyrpides N."/>
            <person name="Kim E."/>
            <person name="Zhao J.-S.Z."/>
            <person name="Manno D."/>
            <person name="Hawari J."/>
            <person name="Richardson P."/>
        </authorList>
    </citation>
    <scope>NUCLEOTIDE SEQUENCE [LARGE SCALE GENOMIC DNA]</scope>
    <source>
        <strain>ATCC 700345 / ANG-SQ1</strain>
    </source>
</reference>
<accession>A8H613</accession>